<name>RL10_METKA</name>
<comment type="function">
    <text evidence="1">Forms part of the ribosomal stalk, playing a central role in the interaction of the ribosome with GTP-bound translation factors.</text>
</comment>
<comment type="subunit">
    <text evidence="1">Part of the 50S ribosomal subunit. Forms part of the ribosomal stalk which helps the ribosome interact with GTP-bound translation factors. Forms a heptameric L10(L12)2(L12)2(L12)2 complex, where L10 forms an elongated spine to which the L12 dimers bind in a sequential fashion.</text>
</comment>
<comment type="similarity">
    <text evidence="1">Belongs to the universal ribosomal protein uL10 family.</text>
</comment>
<comment type="sequence caution" evidence="3">
    <conflict type="erroneous initiation">
        <sequence resource="EMBL-CDS" id="AAM02039"/>
    </conflict>
    <text>Extended N-terminus.</text>
</comment>
<reference key="1">
    <citation type="journal article" date="2002" name="Proc. Natl. Acad. Sci. U.S.A.">
        <title>The complete genome of hyperthermophile Methanopyrus kandleri AV19 and monophyly of archaeal methanogens.</title>
        <authorList>
            <person name="Slesarev A.I."/>
            <person name="Mezhevaya K.V."/>
            <person name="Makarova K.S."/>
            <person name="Polushin N.N."/>
            <person name="Shcherbinina O.V."/>
            <person name="Shakhova V.V."/>
            <person name="Belova G.I."/>
            <person name="Aravind L."/>
            <person name="Natale D.A."/>
            <person name="Rogozin I.B."/>
            <person name="Tatusov R.L."/>
            <person name="Wolf Y.I."/>
            <person name="Stetter K.O."/>
            <person name="Malykh A.G."/>
            <person name="Koonin E.V."/>
            <person name="Kozyavkin S.A."/>
        </authorList>
    </citation>
    <scope>NUCLEOTIDE SEQUENCE [LARGE SCALE GENOMIC DNA]</scope>
    <source>
        <strain>AV19 / DSM 6324 / JCM 9639 / NBRC 100938</strain>
    </source>
</reference>
<sequence length="357" mass="39250">MAVKAKGQPPSGYEPKVAEWKRREVKELKELMDEYENVGLVDLEGIPAPQLQEIRAKLRERDTIIRMSRNTLMRIALEEKLDERPELEPLLDYIEGPVAFIFTNLDPFKLYKLLEESKASAPAKPGDIAPEDIVVPEGPTPFEPGPIVSELQQAGLPAQIQDGKVVITKDTVLVKEGEEIDEKTAEILKKLEIEPMEVGVDIVAIVAEGTLFERDDLAIDFDEYEDMAKEAAQHAFNLSINAAIPTAETADVIVAKAHTEALNLAVNAGVPVPDETVMGCILAKAHGEMLALAGAIAEVDEEALDEELLEMVSRSAEAAERKEKEEEEEEEAEEEEAEEEEEEEEEEAAAGLGALFG</sequence>
<feature type="chain" id="PRO_0000154794" description="Large ribosomal subunit protein uL10">
    <location>
        <begin position="1"/>
        <end position="357"/>
    </location>
</feature>
<feature type="region of interest" description="Disordered" evidence="2">
    <location>
        <begin position="311"/>
        <end position="357"/>
    </location>
</feature>
<feature type="compositionally biased region" description="Acidic residues" evidence="2">
    <location>
        <begin position="325"/>
        <end position="348"/>
    </location>
</feature>
<evidence type="ECO:0000255" key="1">
    <source>
        <dbReference type="HAMAP-Rule" id="MF_00280"/>
    </source>
</evidence>
<evidence type="ECO:0000256" key="2">
    <source>
        <dbReference type="SAM" id="MobiDB-lite"/>
    </source>
</evidence>
<evidence type="ECO:0000305" key="3"/>
<keyword id="KW-1185">Reference proteome</keyword>
<keyword id="KW-0687">Ribonucleoprotein</keyword>
<keyword id="KW-0689">Ribosomal protein</keyword>
<keyword id="KW-0694">RNA-binding</keyword>
<keyword id="KW-0699">rRNA-binding</keyword>
<gene>
    <name evidence="1" type="primary">rpl10</name>
    <name evidence="1" type="synonym">rplP0</name>
    <name type="ordered locus">MK0826</name>
</gene>
<proteinExistence type="inferred from homology"/>
<dbReference type="EMBL" id="AE009439">
    <property type="protein sequence ID" value="AAM02039.1"/>
    <property type="status" value="ALT_INIT"/>
    <property type="molecule type" value="Genomic_DNA"/>
</dbReference>
<dbReference type="RefSeq" id="WP_148679616.1">
    <property type="nucleotide sequence ID" value="NC_003551.1"/>
</dbReference>
<dbReference type="SMR" id="Q8TX50"/>
<dbReference type="FunCoup" id="Q8TX50">
    <property type="interactions" value="157"/>
</dbReference>
<dbReference type="STRING" id="190192.MK0826"/>
<dbReference type="PaxDb" id="190192-MK0826"/>
<dbReference type="EnsemblBacteria" id="AAM02039">
    <property type="protein sequence ID" value="AAM02039"/>
    <property type="gene ID" value="MK0826"/>
</dbReference>
<dbReference type="GeneID" id="1476927"/>
<dbReference type="KEGG" id="mka:MK0826"/>
<dbReference type="PATRIC" id="fig|190192.8.peg.868"/>
<dbReference type="HOGENOM" id="CLU_053173_0_0_2"/>
<dbReference type="InParanoid" id="Q8TX50"/>
<dbReference type="OrthoDB" id="30930at2157"/>
<dbReference type="Proteomes" id="UP000001826">
    <property type="component" value="Chromosome"/>
</dbReference>
<dbReference type="GO" id="GO:0022625">
    <property type="term" value="C:cytosolic large ribosomal subunit"/>
    <property type="evidence" value="ECO:0007669"/>
    <property type="project" value="TreeGrafter"/>
</dbReference>
<dbReference type="GO" id="GO:0070180">
    <property type="term" value="F:large ribosomal subunit rRNA binding"/>
    <property type="evidence" value="ECO:0007669"/>
    <property type="project" value="UniProtKB-UniRule"/>
</dbReference>
<dbReference type="GO" id="GO:0003735">
    <property type="term" value="F:structural constituent of ribosome"/>
    <property type="evidence" value="ECO:0007669"/>
    <property type="project" value="TreeGrafter"/>
</dbReference>
<dbReference type="GO" id="GO:0002181">
    <property type="term" value="P:cytoplasmic translation"/>
    <property type="evidence" value="ECO:0007669"/>
    <property type="project" value="TreeGrafter"/>
</dbReference>
<dbReference type="GO" id="GO:0000027">
    <property type="term" value="P:ribosomal large subunit assembly"/>
    <property type="evidence" value="ECO:0007669"/>
    <property type="project" value="TreeGrafter"/>
</dbReference>
<dbReference type="CDD" id="cd05795">
    <property type="entry name" value="Ribosomal_P0_L10e"/>
    <property type="match status" value="1"/>
</dbReference>
<dbReference type="FunFam" id="3.90.105.20:FF:000001">
    <property type="entry name" value="60S acidic ribosomal protein P0"/>
    <property type="match status" value="1"/>
</dbReference>
<dbReference type="Gene3D" id="3.30.70.1730">
    <property type="match status" value="1"/>
</dbReference>
<dbReference type="Gene3D" id="3.90.105.20">
    <property type="match status" value="1"/>
</dbReference>
<dbReference type="Gene3D" id="6.10.140.760">
    <property type="match status" value="1"/>
</dbReference>
<dbReference type="HAMAP" id="MF_00280">
    <property type="entry name" value="Ribosomal_uL10_arch"/>
    <property type="match status" value="1"/>
</dbReference>
<dbReference type="InterPro" id="IPR050323">
    <property type="entry name" value="Ribosomal_protein_uL10"/>
</dbReference>
<dbReference type="InterPro" id="IPR001790">
    <property type="entry name" value="Ribosomal_uL10"/>
</dbReference>
<dbReference type="InterPro" id="IPR040637">
    <property type="entry name" value="Ribosomal_uL10-like_insert"/>
</dbReference>
<dbReference type="InterPro" id="IPR043164">
    <property type="entry name" value="Ribosomal_uL10-like_insert_sf"/>
</dbReference>
<dbReference type="InterPro" id="IPR043141">
    <property type="entry name" value="Ribosomal_uL10-like_sf"/>
</dbReference>
<dbReference type="InterPro" id="IPR022909">
    <property type="entry name" value="Ribosomal_uL10_arc"/>
</dbReference>
<dbReference type="NCBIfam" id="NF003098">
    <property type="entry name" value="PRK04019.1-5"/>
    <property type="match status" value="1"/>
</dbReference>
<dbReference type="PANTHER" id="PTHR45699">
    <property type="entry name" value="60S ACIDIC RIBOSOMAL PROTEIN P0"/>
    <property type="match status" value="1"/>
</dbReference>
<dbReference type="PANTHER" id="PTHR45699:SF3">
    <property type="entry name" value="LARGE RIBOSOMAL SUBUNIT PROTEIN UL10"/>
    <property type="match status" value="1"/>
</dbReference>
<dbReference type="Pfam" id="PF00466">
    <property type="entry name" value="Ribosomal_L10"/>
    <property type="match status" value="1"/>
</dbReference>
<dbReference type="Pfam" id="PF17777">
    <property type="entry name" value="RL10P_insert"/>
    <property type="match status" value="1"/>
</dbReference>
<dbReference type="SUPFAM" id="SSF160369">
    <property type="entry name" value="Ribosomal protein L10-like"/>
    <property type="match status" value="1"/>
</dbReference>
<protein>
    <recommendedName>
        <fullName evidence="1">Large ribosomal subunit protein uL10</fullName>
    </recommendedName>
    <alternativeName>
        <fullName evidence="3">50S ribosomal protein L10</fullName>
    </alternativeName>
    <alternativeName>
        <fullName evidence="1">Acidic ribosomal protein P0 homolog</fullName>
    </alternativeName>
</protein>
<accession>Q8TX50</accession>
<organism>
    <name type="scientific">Methanopyrus kandleri (strain AV19 / DSM 6324 / JCM 9639 / NBRC 100938)</name>
    <dbReference type="NCBI Taxonomy" id="190192"/>
    <lineage>
        <taxon>Archaea</taxon>
        <taxon>Methanobacteriati</taxon>
        <taxon>Methanobacteriota</taxon>
        <taxon>Methanomada group</taxon>
        <taxon>Methanopyri</taxon>
        <taxon>Methanopyrales</taxon>
        <taxon>Methanopyraceae</taxon>
        <taxon>Methanopyrus</taxon>
    </lineage>
</organism>